<feature type="chain" id="PRO_0000206505" description="Ribonuclease Le2">
    <location>
        <begin position="1"/>
        <end position="239"/>
    </location>
</feature>
<feature type="active site" evidence="1">
    <location>
        <position position="51"/>
    </location>
</feature>
<feature type="active site" evidence="1">
    <location>
        <position position="111"/>
    </location>
</feature>
<feature type="active site" evidence="1">
    <location>
        <position position="115"/>
    </location>
</feature>
<feature type="disulfide bond" evidence="1">
    <location>
        <begin position="5"/>
        <end position="22"/>
    </location>
</feature>
<feature type="disulfide bond" evidence="1">
    <location>
        <begin position="13"/>
        <end position="58"/>
    </location>
</feature>
<feature type="disulfide bond" evidence="1">
    <location>
        <begin position="21"/>
        <end position="126"/>
    </location>
</feature>
<feature type="disulfide bond" evidence="1">
    <location>
        <begin position="66"/>
        <end position="118"/>
    </location>
</feature>
<feature type="disulfide bond" evidence="1">
    <location>
        <begin position="191"/>
        <end position="225"/>
    </location>
</feature>
<protein>
    <recommendedName>
        <fullName>Ribonuclease Le2</fullName>
        <shortName>RNase Le2</shortName>
        <ecNumber>4.6.1.19</ecNumber>
    </recommendedName>
</protein>
<comment type="function">
    <text>This is a base non-specific and adenylic acid preferential ribonuclease.</text>
</comment>
<comment type="catalytic activity">
    <reaction evidence="2 3">
        <text>a ribonucleotidyl-ribonucleotide-RNA + H2O = a 3'-end 3'-phospho-ribonucleotide-RNA + a 5'-end dephospho-ribonucleoside-RNA + H(+)</text>
        <dbReference type="Rhea" id="RHEA:68052"/>
        <dbReference type="Rhea" id="RHEA-COMP:10463"/>
        <dbReference type="Rhea" id="RHEA-COMP:13936"/>
        <dbReference type="Rhea" id="RHEA-COMP:17355"/>
        <dbReference type="ChEBI" id="CHEBI:15377"/>
        <dbReference type="ChEBI" id="CHEBI:15378"/>
        <dbReference type="ChEBI" id="CHEBI:83062"/>
        <dbReference type="ChEBI" id="CHEBI:138284"/>
        <dbReference type="ChEBI" id="CHEBI:173118"/>
        <dbReference type="EC" id="4.6.1.19"/>
    </reaction>
</comment>
<comment type="similarity">
    <text evidence="4">Belongs to the RNase T2 family.</text>
</comment>
<dbReference type="EC" id="4.6.1.19"/>
<dbReference type="PIR" id="JC1373">
    <property type="entry name" value="JC1373"/>
</dbReference>
<dbReference type="SMR" id="P81296"/>
<dbReference type="GO" id="GO:0005576">
    <property type="term" value="C:extracellular region"/>
    <property type="evidence" value="ECO:0007669"/>
    <property type="project" value="TreeGrafter"/>
</dbReference>
<dbReference type="GO" id="GO:0033897">
    <property type="term" value="F:ribonuclease T2 activity"/>
    <property type="evidence" value="ECO:0007669"/>
    <property type="project" value="UniProtKB-EC"/>
</dbReference>
<dbReference type="GO" id="GO:0003723">
    <property type="term" value="F:RNA binding"/>
    <property type="evidence" value="ECO:0007669"/>
    <property type="project" value="InterPro"/>
</dbReference>
<dbReference type="GO" id="GO:0006401">
    <property type="term" value="P:RNA catabolic process"/>
    <property type="evidence" value="ECO:0007669"/>
    <property type="project" value="TreeGrafter"/>
</dbReference>
<dbReference type="CDD" id="cd01061">
    <property type="entry name" value="RNase_T2_euk"/>
    <property type="match status" value="1"/>
</dbReference>
<dbReference type="Gene3D" id="3.90.730.10">
    <property type="entry name" value="Ribonuclease T2-like"/>
    <property type="match status" value="1"/>
</dbReference>
<dbReference type="InterPro" id="IPR033697">
    <property type="entry name" value="Ribonuclease_T2_eukaryotic"/>
</dbReference>
<dbReference type="InterPro" id="IPR001568">
    <property type="entry name" value="RNase_T2-like"/>
</dbReference>
<dbReference type="InterPro" id="IPR036430">
    <property type="entry name" value="RNase_T2-like_sf"/>
</dbReference>
<dbReference type="InterPro" id="IPR018188">
    <property type="entry name" value="RNase_T2_His_AS_1"/>
</dbReference>
<dbReference type="InterPro" id="IPR033130">
    <property type="entry name" value="RNase_T2_His_AS_2"/>
</dbReference>
<dbReference type="PANTHER" id="PTHR11240">
    <property type="entry name" value="RIBONUCLEASE T2"/>
    <property type="match status" value="1"/>
</dbReference>
<dbReference type="PANTHER" id="PTHR11240:SF22">
    <property type="entry name" value="RIBONUCLEASE T2"/>
    <property type="match status" value="1"/>
</dbReference>
<dbReference type="Pfam" id="PF00445">
    <property type="entry name" value="Ribonuclease_T2"/>
    <property type="match status" value="1"/>
</dbReference>
<dbReference type="SUPFAM" id="SSF55895">
    <property type="entry name" value="Ribonuclease Rh-like"/>
    <property type="match status" value="1"/>
</dbReference>
<dbReference type="PROSITE" id="PS00530">
    <property type="entry name" value="RNASE_T2_1"/>
    <property type="match status" value="1"/>
</dbReference>
<dbReference type="PROSITE" id="PS00531">
    <property type="entry name" value="RNASE_T2_2"/>
    <property type="match status" value="1"/>
</dbReference>
<accession>P81296</accession>
<name>RNL2_LENED</name>
<evidence type="ECO:0000250" key="1"/>
<evidence type="ECO:0000255" key="2">
    <source>
        <dbReference type="PROSITE-ProRule" id="PRU10045"/>
    </source>
</evidence>
<evidence type="ECO:0000255" key="3">
    <source>
        <dbReference type="PROSITE-ProRule" id="PRU10046"/>
    </source>
</evidence>
<evidence type="ECO:0000305" key="4"/>
<proteinExistence type="evidence at protein level"/>
<keyword id="KW-0903">Direct protein sequencing</keyword>
<keyword id="KW-1015">Disulfide bond</keyword>
<keyword id="KW-0255">Endonuclease</keyword>
<keyword id="KW-0378">Hydrolase</keyword>
<keyword id="KW-0456">Lyase</keyword>
<keyword id="KW-0540">Nuclease</keyword>
<reference key="1">
    <citation type="journal article" date="1992" name="Biosci. Biotechnol. Biochem.">
        <title>Primary structure of a base non-specific and adenylic acid preferential ribonuclease from the fruit bodies of Lentinus edodes.</title>
        <authorList>
            <person name="Kobayashi H."/>
            <person name="Inokuchi N."/>
            <person name="Koyama T."/>
            <person name="Watanabe H."/>
            <person name="Iwama M."/>
            <person name="Ohgi K."/>
            <person name="Irie M."/>
        </authorList>
    </citation>
    <scope>PROTEIN SEQUENCE</scope>
</reference>
<reference key="2">
    <citation type="journal article" date="1991" name="Agric. Biol. Chem.">
        <title>Purification and characterization of a base non-specific and adenylic acid preferring ribonuclease from the fruit bodies of Lentinus edodes.</title>
        <authorList>
            <person name="Shimada H."/>
            <person name="Inokuchi N."/>
            <person name="Okuwaki H."/>
            <person name="Koyama T."/>
            <person name="Irie M."/>
        </authorList>
    </citation>
    <scope>PROTEIN SEQUENCE OF 1-40</scope>
</reference>
<sequence length="239" mass="25877">ISSGCGTTGALSCSSNAKGTCCFEAPGGLILQTQFWDTSPETGPTDSWTIHGLWPDNCDGSFSEDCDPSRDYTGISSLLTAQGASDTLQFMNQFWLNDPDDGSNEELWEHEWATHGTCYSTLQTSCLPEGSPKGAEAVAFFEQVVTLFKTLPTYEWLTNQGIKPSSSTTHTYSALTAALEAEAGVIPALNCDGSDLDEIYWYFHLRGSVIDGEFEPISAPEKGDCPSSGIKWLPKNNEK</sequence>
<organism>
    <name type="scientific">Lentinula edodes</name>
    <name type="common">Shiitake mushroom</name>
    <name type="synonym">Lentinus edodes</name>
    <dbReference type="NCBI Taxonomy" id="5353"/>
    <lineage>
        <taxon>Eukaryota</taxon>
        <taxon>Fungi</taxon>
        <taxon>Dikarya</taxon>
        <taxon>Basidiomycota</taxon>
        <taxon>Agaricomycotina</taxon>
        <taxon>Agaricomycetes</taxon>
        <taxon>Agaricomycetidae</taxon>
        <taxon>Agaricales</taxon>
        <taxon>Marasmiineae</taxon>
        <taxon>Omphalotaceae</taxon>
        <taxon>Lentinula</taxon>
    </lineage>
</organism>